<name>UBIE_KLEP7</name>
<gene>
    <name evidence="1" type="primary">ubiE</name>
    <name type="ordered locus">KPN78578_42730</name>
    <name type="ORF">KPN_04329</name>
</gene>
<proteinExistence type="inferred from homology"/>
<dbReference type="EC" id="2.1.1.163" evidence="1"/>
<dbReference type="EC" id="2.1.1.201" evidence="1"/>
<dbReference type="EMBL" id="CP000647">
    <property type="protein sequence ID" value="ABR79697.1"/>
    <property type="molecule type" value="Genomic_DNA"/>
</dbReference>
<dbReference type="RefSeq" id="WP_002883421.1">
    <property type="nucleotide sequence ID" value="NC_009648.1"/>
</dbReference>
<dbReference type="SMR" id="A6TGL3"/>
<dbReference type="STRING" id="272620.KPN_04329"/>
<dbReference type="PaxDb" id="272620-KPN_04329"/>
<dbReference type="EnsemblBacteria" id="ABR79697">
    <property type="protein sequence ID" value="ABR79697"/>
    <property type="gene ID" value="KPN_04329"/>
</dbReference>
<dbReference type="GeneID" id="69757783"/>
<dbReference type="KEGG" id="kpn:KPN_04329"/>
<dbReference type="HOGENOM" id="CLU_037990_0_0_6"/>
<dbReference type="UniPathway" id="UPA00079">
    <property type="reaction ID" value="UER00169"/>
</dbReference>
<dbReference type="UniPathway" id="UPA00232"/>
<dbReference type="Proteomes" id="UP000000265">
    <property type="component" value="Chromosome"/>
</dbReference>
<dbReference type="GO" id="GO:0008425">
    <property type="term" value="F:2-methoxy-6-polyprenyl-1,4-benzoquinol methyltransferase activity"/>
    <property type="evidence" value="ECO:0007669"/>
    <property type="project" value="UniProtKB-UniRule"/>
</dbReference>
<dbReference type="GO" id="GO:0043770">
    <property type="term" value="F:demethylmenaquinone methyltransferase activity"/>
    <property type="evidence" value="ECO:0007669"/>
    <property type="project" value="UniProtKB-UniRule"/>
</dbReference>
<dbReference type="GO" id="GO:0009060">
    <property type="term" value="P:aerobic respiration"/>
    <property type="evidence" value="ECO:0007669"/>
    <property type="project" value="UniProtKB-UniRule"/>
</dbReference>
<dbReference type="GO" id="GO:0009234">
    <property type="term" value="P:menaquinone biosynthetic process"/>
    <property type="evidence" value="ECO:0007669"/>
    <property type="project" value="UniProtKB-UniRule"/>
</dbReference>
<dbReference type="GO" id="GO:0032259">
    <property type="term" value="P:methylation"/>
    <property type="evidence" value="ECO:0007669"/>
    <property type="project" value="UniProtKB-KW"/>
</dbReference>
<dbReference type="CDD" id="cd02440">
    <property type="entry name" value="AdoMet_MTases"/>
    <property type="match status" value="1"/>
</dbReference>
<dbReference type="FunFam" id="3.40.50.150:FF:000014">
    <property type="entry name" value="Ubiquinone/menaquinone biosynthesis C-methyltransferase UbiE"/>
    <property type="match status" value="1"/>
</dbReference>
<dbReference type="Gene3D" id="3.40.50.150">
    <property type="entry name" value="Vaccinia Virus protein VP39"/>
    <property type="match status" value="1"/>
</dbReference>
<dbReference type="HAMAP" id="MF_01813">
    <property type="entry name" value="MenG_UbiE_methyltr"/>
    <property type="match status" value="1"/>
</dbReference>
<dbReference type="InterPro" id="IPR029063">
    <property type="entry name" value="SAM-dependent_MTases_sf"/>
</dbReference>
<dbReference type="InterPro" id="IPR004033">
    <property type="entry name" value="UbiE/COQ5_MeTrFase"/>
</dbReference>
<dbReference type="InterPro" id="IPR023576">
    <property type="entry name" value="UbiE/COQ5_MeTrFase_CS"/>
</dbReference>
<dbReference type="NCBIfam" id="TIGR01934">
    <property type="entry name" value="MenG_MenH_UbiE"/>
    <property type="match status" value="1"/>
</dbReference>
<dbReference type="NCBIfam" id="NF001240">
    <property type="entry name" value="PRK00216.1-1"/>
    <property type="match status" value="1"/>
</dbReference>
<dbReference type="NCBIfam" id="NF001244">
    <property type="entry name" value="PRK00216.1-5"/>
    <property type="match status" value="1"/>
</dbReference>
<dbReference type="PANTHER" id="PTHR43591:SF24">
    <property type="entry name" value="2-METHOXY-6-POLYPRENYL-1,4-BENZOQUINOL METHYLASE, MITOCHONDRIAL"/>
    <property type="match status" value="1"/>
</dbReference>
<dbReference type="PANTHER" id="PTHR43591">
    <property type="entry name" value="METHYLTRANSFERASE"/>
    <property type="match status" value="1"/>
</dbReference>
<dbReference type="Pfam" id="PF01209">
    <property type="entry name" value="Ubie_methyltran"/>
    <property type="match status" value="1"/>
</dbReference>
<dbReference type="SUPFAM" id="SSF53335">
    <property type="entry name" value="S-adenosyl-L-methionine-dependent methyltransferases"/>
    <property type="match status" value="1"/>
</dbReference>
<dbReference type="PROSITE" id="PS51608">
    <property type="entry name" value="SAM_MT_UBIE"/>
    <property type="match status" value="1"/>
</dbReference>
<dbReference type="PROSITE" id="PS01183">
    <property type="entry name" value="UBIE_1"/>
    <property type="match status" value="1"/>
</dbReference>
<dbReference type="PROSITE" id="PS01184">
    <property type="entry name" value="UBIE_2"/>
    <property type="match status" value="1"/>
</dbReference>
<keyword id="KW-0474">Menaquinone biosynthesis</keyword>
<keyword id="KW-0489">Methyltransferase</keyword>
<keyword id="KW-0949">S-adenosyl-L-methionine</keyword>
<keyword id="KW-0808">Transferase</keyword>
<keyword id="KW-0831">Ubiquinone biosynthesis</keyword>
<reference key="1">
    <citation type="submission" date="2006-09" db="EMBL/GenBank/DDBJ databases">
        <authorList>
            <consortium name="The Klebsiella pneumonia Genome Sequencing Project"/>
            <person name="McClelland M."/>
            <person name="Sanderson E.K."/>
            <person name="Spieth J."/>
            <person name="Clifton W.S."/>
            <person name="Latreille P."/>
            <person name="Sabo A."/>
            <person name="Pepin K."/>
            <person name="Bhonagiri V."/>
            <person name="Porwollik S."/>
            <person name="Ali J."/>
            <person name="Wilson R.K."/>
        </authorList>
    </citation>
    <scope>NUCLEOTIDE SEQUENCE [LARGE SCALE GENOMIC DNA]</scope>
    <source>
        <strain>ATCC 700721 / MGH 78578</strain>
    </source>
</reference>
<evidence type="ECO:0000255" key="1">
    <source>
        <dbReference type="HAMAP-Rule" id="MF_01813"/>
    </source>
</evidence>
<organism>
    <name type="scientific">Klebsiella pneumoniae subsp. pneumoniae (strain ATCC 700721 / MGH 78578)</name>
    <dbReference type="NCBI Taxonomy" id="272620"/>
    <lineage>
        <taxon>Bacteria</taxon>
        <taxon>Pseudomonadati</taxon>
        <taxon>Pseudomonadota</taxon>
        <taxon>Gammaproteobacteria</taxon>
        <taxon>Enterobacterales</taxon>
        <taxon>Enterobacteriaceae</taxon>
        <taxon>Klebsiella/Raoultella group</taxon>
        <taxon>Klebsiella</taxon>
        <taxon>Klebsiella pneumoniae complex</taxon>
    </lineage>
</organism>
<sequence>MVEDSQETTHFGFQTVAKEQKADMVAHVFHSVAAKYDVMNDLMSFGIHRLWKRFTIDCSGVRRGQTVLDLAGGTGDLTAKFSRLVGETGRVMLADINDSMLKMGREKLRNIGIVGNVEYVQANAEALPFADNTFDCITISFGLRNVTDKEKALRSMYRVLKPGGRLLVLEFSKPIIEPLSKAYDAYSFHILPKVGELVAKDGDSYRYLAESIRMHPDQETLKGMMQDAGFENVDYYNLTAGIVALHRGYKF</sequence>
<protein>
    <recommendedName>
        <fullName evidence="1">Ubiquinone/menaquinone biosynthesis C-methyltransferase UbiE</fullName>
        <ecNumber evidence="1">2.1.1.163</ecNumber>
        <ecNumber evidence="1">2.1.1.201</ecNumber>
    </recommendedName>
    <alternativeName>
        <fullName evidence="1">2-methoxy-6-polyprenyl-1,4-benzoquinol methylase</fullName>
    </alternativeName>
    <alternativeName>
        <fullName evidence="1">Demethylmenaquinone methyltransferase</fullName>
    </alternativeName>
</protein>
<feature type="chain" id="PRO_1000056254" description="Ubiquinone/menaquinone biosynthesis C-methyltransferase UbiE">
    <location>
        <begin position="1"/>
        <end position="251"/>
    </location>
</feature>
<feature type="binding site" evidence="1">
    <location>
        <position position="74"/>
    </location>
    <ligand>
        <name>S-adenosyl-L-methionine</name>
        <dbReference type="ChEBI" id="CHEBI:59789"/>
    </ligand>
</feature>
<feature type="binding site" evidence="1">
    <location>
        <position position="95"/>
    </location>
    <ligand>
        <name>S-adenosyl-L-methionine</name>
        <dbReference type="ChEBI" id="CHEBI:59789"/>
    </ligand>
</feature>
<feature type="binding site" evidence="1">
    <location>
        <begin position="123"/>
        <end position="124"/>
    </location>
    <ligand>
        <name>S-adenosyl-L-methionine</name>
        <dbReference type="ChEBI" id="CHEBI:59789"/>
    </ligand>
</feature>
<feature type="binding site" evidence="1">
    <location>
        <position position="140"/>
    </location>
    <ligand>
        <name>S-adenosyl-L-methionine</name>
        <dbReference type="ChEBI" id="CHEBI:59789"/>
    </ligand>
</feature>
<comment type="function">
    <text evidence="1">Methyltransferase required for the conversion of demethylmenaquinol (DMKH2) to menaquinol (MKH2) and the conversion of 2-polyprenyl-6-methoxy-1,4-benzoquinol (DDMQH2) to 2-polyprenyl-3-methyl-6-methoxy-1,4-benzoquinol (DMQH2).</text>
</comment>
<comment type="catalytic activity">
    <reaction evidence="1">
        <text>a 2-demethylmenaquinol + S-adenosyl-L-methionine = a menaquinol + S-adenosyl-L-homocysteine + H(+)</text>
        <dbReference type="Rhea" id="RHEA:42640"/>
        <dbReference type="Rhea" id="RHEA-COMP:9539"/>
        <dbReference type="Rhea" id="RHEA-COMP:9563"/>
        <dbReference type="ChEBI" id="CHEBI:15378"/>
        <dbReference type="ChEBI" id="CHEBI:18151"/>
        <dbReference type="ChEBI" id="CHEBI:55437"/>
        <dbReference type="ChEBI" id="CHEBI:57856"/>
        <dbReference type="ChEBI" id="CHEBI:59789"/>
        <dbReference type="EC" id="2.1.1.163"/>
    </reaction>
</comment>
<comment type="catalytic activity">
    <reaction evidence="1">
        <text>a 2-methoxy-6-(all-trans-polyprenyl)benzene-1,4-diol + S-adenosyl-L-methionine = a 5-methoxy-2-methyl-3-(all-trans-polyprenyl)benzene-1,4-diol + S-adenosyl-L-homocysteine + H(+)</text>
        <dbReference type="Rhea" id="RHEA:28286"/>
        <dbReference type="Rhea" id="RHEA-COMP:10858"/>
        <dbReference type="Rhea" id="RHEA-COMP:10859"/>
        <dbReference type="ChEBI" id="CHEBI:15378"/>
        <dbReference type="ChEBI" id="CHEBI:57856"/>
        <dbReference type="ChEBI" id="CHEBI:59789"/>
        <dbReference type="ChEBI" id="CHEBI:84166"/>
        <dbReference type="ChEBI" id="CHEBI:84167"/>
        <dbReference type="EC" id="2.1.1.201"/>
    </reaction>
</comment>
<comment type="pathway">
    <text evidence="1">Quinol/quinone metabolism; menaquinone biosynthesis; menaquinol from 1,4-dihydroxy-2-naphthoate: step 2/2.</text>
</comment>
<comment type="pathway">
    <text evidence="1">Cofactor biosynthesis; ubiquinone biosynthesis.</text>
</comment>
<comment type="similarity">
    <text evidence="1">Belongs to the class I-like SAM-binding methyltransferase superfamily. MenG/UbiE family.</text>
</comment>
<accession>A6TGL3</accession>